<proteinExistence type="evidence at transcript level"/>
<name>OR2M3_HUMAN</name>
<accession>Q8NG83</accession>
<accession>B9EH06</accession>
<accession>Q6IEY0</accession>
<feature type="chain" id="PRO_0000150492" description="Olfactory receptor 2M3">
    <location>
        <begin position="1"/>
        <end position="312"/>
    </location>
</feature>
<feature type="topological domain" description="Extracellular" evidence="1">
    <location>
        <begin position="1"/>
        <end position="25"/>
    </location>
</feature>
<feature type="transmembrane region" description="Helical; Name=1" evidence="1">
    <location>
        <begin position="26"/>
        <end position="49"/>
    </location>
</feature>
<feature type="topological domain" description="Cytoplasmic" evidence="1">
    <location>
        <begin position="50"/>
        <end position="57"/>
    </location>
</feature>
<feature type="transmembrane region" description="Helical; Name=2" evidence="1">
    <location>
        <begin position="58"/>
        <end position="79"/>
    </location>
</feature>
<feature type="topological domain" description="Extracellular" evidence="1">
    <location>
        <begin position="80"/>
        <end position="100"/>
    </location>
</feature>
<feature type="transmembrane region" description="Helical; Name=3" evidence="1">
    <location>
        <begin position="101"/>
        <end position="120"/>
    </location>
</feature>
<feature type="topological domain" description="Cytoplasmic" evidence="1">
    <location>
        <begin position="121"/>
        <end position="139"/>
    </location>
</feature>
<feature type="transmembrane region" description="Helical; Name=4" evidence="1">
    <location>
        <begin position="140"/>
        <end position="158"/>
    </location>
</feature>
<feature type="topological domain" description="Extracellular" evidence="1">
    <location>
        <begin position="159"/>
        <end position="195"/>
    </location>
</feature>
<feature type="transmembrane region" description="Helical; Name=5" evidence="1">
    <location>
        <begin position="196"/>
        <end position="219"/>
    </location>
</feature>
<feature type="topological domain" description="Cytoplasmic" evidence="1">
    <location>
        <begin position="220"/>
        <end position="236"/>
    </location>
</feature>
<feature type="transmembrane region" description="Helical; Name=6" evidence="1">
    <location>
        <begin position="237"/>
        <end position="259"/>
    </location>
</feature>
<feature type="topological domain" description="Extracellular" evidence="1">
    <location>
        <begin position="260"/>
        <end position="272"/>
    </location>
</feature>
<feature type="transmembrane region" description="Helical; Name=7" evidence="1">
    <location>
        <begin position="273"/>
        <end position="292"/>
    </location>
</feature>
<feature type="topological domain" description="Cytoplasmic" evidence="1">
    <location>
        <begin position="293"/>
        <end position="312"/>
    </location>
</feature>
<feature type="glycosylation site" description="N-linked (GlcNAc...) asparagine" evidence="1">
    <location>
        <position position="5"/>
    </location>
</feature>
<feature type="disulfide bond" evidence="2">
    <location>
        <begin position="97"/>
        <end position="189"/>
    </location>
</feature>
<dbReference type="EMBL" id="AB065952">
    <property type="protein sequence ID" value="BAC06165.1"/>
    <property type="molecule type" value="Genomic_DNA"/>
</dbReference>
<dbReference type="EMBL" id="AL450303">
    <property type="status" value="NOT_ANNOTATED_CDS"/>
    <property type="molecule type" value="Genomic_DNA"/>
</dbReference>
<dbReference type="EMBL" id="CH471148">
    <property type="protein sequence ID" value="EAW77218.1"/>
    <property type="molecule type" value="Genomic_DNA"/>
</dbReference>
<dbReference type="EMBL" id="BC136970">
    <property type="protein sequence ID" value="AAI36971.1"/>
    <property type="molecule type" value="mRNA"/>
</dbReference>
<dbReference type="EMBL" id="BC136971">
    <property type="protein sequence ID" value="AAI36972.1"/>
    <property type="molecule type" value="mRNA"/>
</dbReference>
<dbReference type="EMBL" id="BK004482">
    <property type="protein sequence ID" value="DAA04880.1"/>
    <property type="molecule type" value="Genomic_DNA"/>
</dbReference>
<dbReference type="CCDS" id="CCDS31107.1"/>
<dbReference type="RefSeq" id="NP_001004689.1">
    <property type="nucleotide sequence ID" value="NM_001004689.2"/>
</dbReference>
<dbReference type="SMR" id="Q8NG83"/>
<dbReference type="FunCoup" id="Q8NG83">
    <property type="interactions" value="462"/>
</dbReference>
<dbReference type="STRING" id="9606.ENSP00000492981"/>
<dbReference type="GlyCosmos" id="Q8NG83">
    <property type="glycosylation" value="1 site, No reported glycans"/>
</dbReference>
<dbReference type="GlyGen" id="Q8NG83">
    <property type="glycosylation" value="1 site"/>
</dbReference>
<dbReference type="iPTMnet" id="Q8NG83"/>
<dbReference type="PhosphoSitePlus" id="Q8NG83"/>
<dbReference type="BioMuta" id="OR2M3"/>
<dbReference type="DMDM" id="38258176"/>
<dbReference type="MassIVE" id="Q8NG83"/>
<dbReference type="PaxDb" id="9606-ENSP00000389625"/>
<dbReference type="Antibodypedia" id="54366">
    <property type="antibodies" value="82 antibodies from 21 providers"/>
</dbReference>
<dbReference type="DNASU" id="127062"/>
<dbReference type="Ensembl" id="ENST00000456743.3">
    <property type="protein sequence ID" value="ENSP00000389625.1"/>
    <property type="gene ID" value="ENSG00000228198.3"/>
</dbReference>
<dbReference type="Ensembl" id="ENST00000641626.1">
    <property type="protein sequence ID" value="ENSP00000492981.1"/>
    <property type="gene ID" value="ENSG00000228198.3"/>
</dbReference>
<dbReference type="GeneID" id="127062"/>
<dbReference type="KEGG" id="hsa:127062"/>
<dbReference type="MANE-Select" id="ENST00000641626.1">
    <property type="protein sequence ID" value="ENSP00000492981.1"/>
    <property type="RefSeq nucleotide sequence ID" value="NM_001004689.2"/>
    <property type="RefSeq protein sequence ID" value="NP_001004689.1"/>
</dbReference>
<dbReference type="UCSC" id="uc010pzg.2">
    <property type="organism name" value="human"/>
</dbReference>
<dbReference type="AGR" id="HGNC:8269"/>
<dbReference type="CTD" id="127062"/>
<dbReference type="GeneCards" id="OR2M3"/>
<dbReference type="HGNC" id="HGNC:8269">
    <property type="gene designation" value="OR2M3"/>
</dbReference>
<dbReference type="HPA" id="ENSG00000228198">
    <property type="expression patterns" value="Tissue enhanced (retina)"/>
</dbReference>
<dbReference type="neXtProt" id="NX_Q8NG83"/>
<dbReference type="OpenTargets" id="ENSG00000228198"/>
<dbReference type="PharmGKB" id="PA32193"/>
<dbReference type="VEuPathDB" id="HostDB:ENSG00000228198"/>
<dbReference type="eggNOG" id="ENOG502SHXQ">
    <property type="taxonomic scope" value="Eukaryota"/>
</dbReference>
<dbReference type="GeneTree" id="ENSGT01130000278260"/>
<dbReference type="HOGENOM" id="CLU_012526_1_2_1"/>
<dbReference type="InParanoid" id="Q8NG83"/>
<dbReference type="OrthoDB" id="9831471at2759"/>
<dbReference type="PAN-GO" id="Q8NG83">
    <property type="GO annotations" value="0 GO annotations based on evolutionary models"/>
</dbReference>
<dbReference type="PhylomeDB" id="Q8NG83"/>
<dbReference type="TreeFam" id="TF337295"/>
<dbReference type="PathwayCommons" id="Q8NG83"/>
<dbReference type="Reactome" id="R-HSA-9752946">
    <property type="pathway name" value="Expression and translocation of olfactory receptors"/>
</dbReference>
<dbReference type="BioGRID-ORCS" id="127062">
    <property type="hits" value="152 hits in 663 CRISPR screens"/>
</dbReference>
<dbReference type="ChiTaRS" id="OR2M3">
    <property type="organism name" value="human"/>
</dbReference>
<dbReference type="GeneWiki" id="OR2M3"/>
<dbReference type="GenomeRNAi" id="127062"/>
<dbReference type="Pharos" id="Q8NG83">
    <property type="development level" value="Tdark"/>
</dbReference>
<dbReference type="PRO" id="PR:Q8NG83"/>
<dbReference type="Proteomes" id="UP000005640">
    <property type="component" value="Chromosome 1"/>
</dbReference>
<dbReference type="RNAct" id="Q8NG83">
    <property type="molecule type" value="protein"/>
</dbReference>
<dbReference type="Bgee" id="ENSG00000228198">
    <property type="expression patterns" value="Expressed in mucosa of transverse colon and 8 other cell types or tissues"/>
</dbReference>
<dbReference type="ExpressionAtlas" id="Q8NG83">
    <property type="expression patterns" value="baseline and differential"/>
</dbReference>
<dbReference type="GO" id="GO:0005886">
    <property type="term" value="C:plasma membrane"/>
    <property type="evidence" value="ECO:0000318"/>
    <property type="project" value="GO_Central"/>
</dbReference>
<dbReference type="GO" id="GO:0004930">
    <property type="term" value="F:G protein-coupled receptor activity"/>
    <property type="evidence" value="ECO:0007669"/>
    <property type="project" value="UniProtKB-KW"/>
</dbReference>
<dbReference type="GO" id="GO:0004984">
    <property type="term" value="F:olfactory receptor activity"/>
    <property type="evidence" value="ECO:0000318"/>
    <property type="project" value="GO_Central"/>
</dbReference>
<dbReference type="GO" id="GO:0050911">
    <property type="term" value="P:detection of chemical stimulus involved in sensory perception of smell"/>
    <property type="evidence" value="ECO:0000318"/>
    <property type="project" value="GO_Central"/>
</dbReference>
<dbReference type="CDD" id="cd15421">
    <property type="entry name" value="7tmA_OR2T-like"/>
    <property type="match status" value="1"/>
</dbReference>
<dbReference type="FunFam" id="1.20.1070.10:FF:000008">
    <property type="entry name" value="Olfactory receptor"/>
    <property type="match status" value="1"/>
</dbReference>
<dbReference type="Gene3D" id="1.20.1070.10">
    <property type="entry name" value="Rhodopsin 7-helix transmembrane proteins"/>
    <property type="match status" value="1"/>
</dbReference>
<dbReference type="InterPro" id="IPR000276">
    <property type="entry name" value="GPCR_Rhodpsn"/>
</dbReference>
<dbReference type="InterPro" id="IPR017452">
    <property type="entry name" value="GPCR_Rhodpsn_7TM"/>
</dbReference>
<dbReference type="InterPro" id="IPR000725">
    <property type="entry name" value="Olfact_rcpt"/>
</dbReference>
<dbReference type="PANTHER" id="PTHR26453">
    <property type="entry name" value="OLFACTORY RECEPTOR"/>
    <property type="match status" value="1"/>
</dbReference>
<dbReference type="Pfam" id="PF13853">
    <property type="entry name" value="7tm_4"/>
    <property type="match status" value="1"/>
</dbReference>
<dbReference type="PRINTS" id="PR00237">
    <property type="entry name" value="GPCRRHODOPSN"/>
</dbReference>
<dbReference type="PRINTS" id="PR00245">
    <property type="entry name" value="OLFACTORYR"/>
</dbReference>
<dbReference type="SMART" id="SM01381">
    <property type="entry name" value="7TM_GPCR_Srsx"/>
    <property type="match status" value="1"/>
</dbReference>
<dbReference type="SUPFAM" id="SSF81321">
    <property type="entry name" value="Family A G protein-coupled receptor-like"/>
    <property type="match status" value="1"/>
</dbReference>
<dbReference type="PROSITE" id="PS00237">
    <property type="entry name" value="G_PROTEIN_RECEP_F1_1"/>
    <property type="match status" value="1"/>
</dbReference>
<dbReference type="PROSITE" id="PS50262">
    <property type="entry name" value="G_PROTEIN_RECEP_F1_2"/>
    <property type="match status" value="1"/>
</dbReference>
<keyword id="KW-1003">Cell membrane</keyword>
<keyword id="KW-1015">Disulfide bond</keyword>
<keyword id="KW-0297">G-protein coupled receptor</keyword>
<keyword id="KW-0325">Glycoprotein</keyword>
<keyword id="KW-0472">Membrane</keyword>
<keyword id="KW-0552">Olfaction</keyword>
<keyword id="KW-0675">Receptor</keyword>
<keyword id="KW-1185">Reference proteome</keyword>
<keyword id="KW-0716">Sensory transduction</keyword>
<keyword id="KW-0807">Transducer</keyword>
<keyword id="KW-0812">Transmembrane</keyword>
<keyword id="KW-1133">Transmembrane helix</keyword>
<organism>
    <name type="scientific">Homo sapiens</name>
    <name type="common">Human</name>
    <dbReference type="NCBI Taxonomy" id="9606"/>
    <lineage>
        <taxon>Eukaryota</taxon>
        <taxon>Metazoa</taxon>
        <taxon>Chordata</taxon>
        <taxon>Craniata</taxon>
        <taxon>Vertebrata</taxon>
        <taxon>Euteleostomi</taxon>
        <taxon>Mammalia</taxon>
        <taxon>Eutheria</taxon>
        <taxon>Euarchontoglires</taxon>
        <taxon>Primates</taxon>
        <taxon>Haplorrhini</taxon>
        <taxon>Catarrhini</taxon>
        <taxon>Hominidae</taxon>
        <taxon>Homo</taxon>
    </lineage>
</organism>
<evidence type="ECO:0000255" key="1"/>
<evidence type="ECO:0000255" key="2">
    <source>
        <dbReference type="PROSITE-ProRule" id="PRU00521"/>
    </source>
</evidence>
<evidence type="ECO:0000305" key="3"/>
<reference key="1">
    <citation type="submission" date="2001-07" db="EMBL/GenBank/DDBJ databases">
        <title>Genome-wide discovery and analysis of human seven transmembrane helix receptor genes.</title>
        <authorList>
            <person name="Suwa M."/>
            <person name="Sato T."/>
            <person name="Okouchi I."/>
            <person name="Arita M."/>
            <person name="Futami K."/>
            <person name="Matsumoto S."/>
            <person name="Tsutsumi S."/>
            <person name="Aburatani H."/>
            <person name="Asai K."/>
            <person name="Akiyama Y."/>
        </authorList>
    </citation>
    <scope>NUCLEOTIDE SEQUENCE [GENOMIC DNA]</scope>
</reference>
<reference key="2">
    <citation type="journal article" date="2006" name="Nature">
        <title>The DNA sequence and biological annotation of human chromosome 1.</title>
        <authorList>
            <person name="Gregory S.G."/>
            <person name="Barlow K.F."/>
            <person name="McLay K.E."/>
            <person name="Kaul R."/>
            <person name="Swarbreck D."/>
            <person name="Dunham A."/>
            <person name="Scott C.E."/>
            <person name="Howe K.L."/>
            <person name="Woodfine K."/>
            <person name="Spencer C.C.A."/>
            <person name="Jones M.C."/>
            <person name="Gillson C."/>
            <person name="Searle S."/>
            <person name="Zhou Y."/>
            <person name="Kokocinski F."/>
            <person name="McDonald L."/>
            <person name="Evans R."/>
            <person name="Phillips K."/>
            <person name="Atkinson A."/>
            <person name="Cooper R."/>
            <person name="Jones C."/>
            <person name="Hall R.E."/>
            <person name="Andrews T.D."/>
            <person name="Lloyd C."/>
            <person name="Ainscough R."/>
            <person name="Almeida J.P."/>
            <person name="Ambrose K.D."/>
            <person name="Anderson F."/>
            <person name="Andrew R.W."/>
            <person name="Ashwell R.I.S."/>
            <person name="Aubin K."/>
            <person name="Babbage A.K."/>
            <person name="Bagguley C.L."/>
            <person name="Bailey J."/>
            <person name="Beasley H."/>
            <person name="Bethel G."/>
            <person name="Bird C.P."/>
            <person name="Bray-Allen S."/>
            <person name="Brown J.Y."/>
            <person name="Brown A.J."/>
            <person name="Buckley D."/>
            <person name="Burton J."/>
            <person name="Bye J."/>
            <person name="Carder C."/>
            <person name="Chapman J.C."/>
            <person name="Clark S.Y."/>
            <person name="Clarke G."/>
            <person name="Clee C."/>
            <person name="Cobley V."/>
            <person name="Collier R.E."/>
            <person name="Corby N."/>
            <person name="Coville G.J."/>
            <person name="Davies J."/>
            <person name="Deadman R."/>
            <person name="Dunn M."/>
            <person name="Earthrowl M."/>
            <person name="Ellington A.G."/>
            <person name="Errington H."/>
            <person name="Frankish A."/>
            <person name="Frankland J."/>
            <person name="French L."/>
            <person name="Garner P."/>
            <person name="Garnett J."/>
            <person name="Gay L."/>
            <person name="Ghori M.R.J."/>
            <person name="Gibson R."/>
            <person name="Gilby L.M."/>
            <person name="Gillett W."/>
            <person name="Glithero R.J."/>
            <person name="Grafham D.V."/>
            <person name="Griffiths C."/>
            <person name="Griffiths-Jones S."/>
            <person name="Grocock R."/>
            <person name="Hammond S."/>
            <person name="Harrison E.S.I."/>
            <person name="Hart E."/>
            <person name="Haugen E."/>
            <person name="Heath P.D."/>
            <person name="Holmes S."/>
            <person name="Holt K."/>
            <person name="Howden P.J."/>
            <person name="Hunt A.R."/>
            <person name="Hunt S.E."/>
            <person name="Hunter G."/>
            <person name="Isherwood J."/>
            <person name="James R."/>
            <person name="Johnson C."/>
            <person name="Johnson D."/>
            <person name="Joy A."/>
            <person name="Kay M."/>
            <person name="Kershaw J.K."/>
            <person name="Kibukawa M."/>
            <person name="Kimberley A.M."/>
            <person name="King A."/>
            <person name="Knights A.J."/>
            <person name="Lad H."/>
            <person name="Laird G."/>
            <person name="Lawlor S."/>
            <person name="Leongamornlert D.A."/>
            <person name="Lloyd D.M."/>
            <person name="Loveland J."/>
            <person name="Lovell J."/>
            <person name="Lush M.J."/>
            <person name="Lyne R."/>
            <person name="Martin S."/>
            <person name="Mashreghi-Mohammadi M."/>
            <person name="Matthews L."/>
            <person name="Matthews N.S.W."/>
            <person name="McLaren S."/>
            <person name="Milne S."/>
            <person name="Mistry S."/>
            <person name="Moore M.J.F."/>
            <person name="Nickerson T."/>
            <person name="O'Dell C.N."/>
            <person name="Oliver K."/>
            <person name="Palmeiri A."/>
            <person name="Palmer S.A."/>
            <person name="Parker A."/>
            <person name="Patel D."/>
            <person name="Pearce A.V."/>
            <person name="Peck A.I."/>
            <person name="Pelan S."/>
            <person name="Phelps K."/>
            <person name="Phillimore B.J."/>
            <person name="Plumb R."/>
            <person name="Rajan J."/>
            <person name="Raymond C."/>
            <person name="Rouse G."/>
            <person name="Saenphimmachak C."/>
            <person name="Sehra H.K."/>
            <person name="Sheridan E."/>
            <person name="Shownkeen R."/>
            <person name="Sims S."/>
            <person name="Skuce C.D."/>
            <person name="Smith M."/>
            <person name="Steward C."/>
            <person name="Subramanian S."/>
            <person name="Sycamore N."/>
            <person name="Tracey A."/>
            <person name="Tromans A."/>
            <person name="Van Helmond Z."/>
            <person name="Wall M."/>
            <person name="Wallis J.M."/>
            <person name="White S."/>
            <person name="Whitehead S.L."/>
            <person name="Wilkinson J.E."/>
            <person name="Willey D.L."/>
            <person name="Williams H."/>
            <person name="Wilming L."/>
            <person name="Wray P.W."/>
            <person name="Wu Z."/>
            <person name="Coulson A."/>
            <person name="Vaudin M."/>
            <person name="Sulston J.E."/>
            <person name="Durbin R.M."/>
            <person name="Hubbard T."/>
            <person name="Wooster R."/>
            <person name="Dunham I."/>
            <person name="Carter N.P."/>
            <person name="McVean G."/>
            <person name="Ross M.T."/>
            <person name="Harrow J."/>
            <person name="Olson M.V."/>
            <person name="Beck S."/>
            <person name="Rogers J."/>
            <person name="Bentley D.R."/>
        </authorList>
    </citation>
    <scope>NUCLEOTIDE SEQUENCE [LARGE SCALE GENOMIC DNA]</scope>
</reference>
<reference key="3">
    <citation type="submission" date="2005-07" db="EMBL/GenBank/DDBJ databases">
        <authorList>
            <person name="Mural R.J."/>
            <person name="Istrail S."/>
            <person name="Sutton G.G."/>
            <person name="Florea L."/>
            <person name="Halpern A.L."/>
            <person name="Mobarry C.M."/>
            <person name="Lippert R."/>
            <person name="Walenz B."/>
            <person name="Shatkay H."/>
            <person name="Dew I."/>
            <person name="Miller J.R."/>
            <person name="Flanigan M.J."/>
            <person name="Edwards N.J."/>
            <person name="Bolanos R."/>
            <person name="Fasulo D."/>
            <person name="Halldorsson B.V."/>
            <person name="Hannenhalli S."/>
            <person name="Turner R."/>
            <person name="Yooseph S."/>
            <person name="Lu F."/>
            <person name="Nusskern D.R."/>
            <person name="Shue B.C."/>
            <person name="Zheng X.H."/>
            <person name="Zhong F."/>
            <person name="Delcher A.L."/>
            <person name="Huson D.H."/>
            <person name="Kravitz S.A."/>
            <person name="Mouchard L."/>
            <person name="Reinert K."/>
            <person name="Remington K.A."/>
            <person name="Clark A.G."/>
            <person name="Waterman M.S."/>
            <person name="Eichler E.E."/>
            <person name="Adams M.D."/>
            <person name="Hunkapiller M.W."/>
            <person name="Myers E.W."/>
            <person name="Venter J.C."/>
        </authorList>
    </citation>
    <scope>NUCLEOTIDE SEQUENCE [LARGE SCALE GENOMIC DNA]</scope>
</reference>
<reference key="4">
    <citation type="journal article" date="2004" name="Genome Res.">
        <title>The status, quality, and expansion of the NIH full-length cDNA project: the Mammalian Gene Collection (MGC).</title>
        <authorList>
            <consortium name="The MGC Project Team"/>
        </authorList>
    </citation>
    <scope>NUCLEOTIDE SEQUENCE [LARGE SCALE MRNA]</scope>
    <source>
        <tissue>Testis</tissue>
    </source>
</reference>
<reference key="5">
    <citation type="journal article" date="2004" name="Proc. Natl. Acad. Sci. U.S.A.">
        <title>The human olfactory receptor gene family.</title>
        <authorList>
            <person name="Malnic B."/>
            <person name="Godfrey P.A."/>
            <person name="Buck L.B."/>
        </authorList>
    </citation>
    <scope>IDENTIFICATION</scope>
</reference>
<reference key="6">
    <citation type="journal article" date="2004" name="Proc. Natl. Acad. Sci. U.S.A.">
        <authorList>
            <person name="Malnic B."/>
            <person name="Godfrey P.A."/>
            <person name="Buck L.B."/>
        </authorList>
    </citation>
    <scope>ERRATUM OF PUBMED:14983052</scope>
</reference>
<gene>
    <name type="primary">OR2M3</name>
    <name type="synonym">OR2M3P</name>
    <name type="synonym">OR2M6</name>
</gene>
<comment type="function">
    <text evidence="3">Odorant receptor.</text>
</comment>
<comment type="subcellular location">
    <subcellularLocation>
        <location>Cell membrane</location>
        <topology>Multi-pass membrane protein</topology>
    </subcellularLocation>
</comment>
<comment type="similarity">
    <text evidence="2">Belongs to the G-protein coupled receptor 1 family.</text>
</comment>
<comment type="online information" name="Human Olfactory Receptor Data Exploratorium (HORDE)">
    <link uri="http://genome.weizmann.ac.il/horde/card/index/symbol:OR2M3"/>
</comment>
<protein>
    <recommendedName>
        <fullName>Olfactory receptor 2M3</fullName>
    </recommendedName>
    <alternativeName>
        <fullName>Olfactory receptor 2M6</fullName>
    </alternativeName>
    <alternativeName>
        <fullName>Olfactory receptor OR1-54</fullName>
    </alternativeName>
</protein>
<sequence length="312" mass="34827">MARENSTFNSDFILLGIFNHSPTHTFLFFLVLAIFSVAFMGNSVMVLLIYLDTQLHTPMYLLLSQLSLMDLMLICTTVPKMAFNYLSGSKSISMAGCATQIFFYTSLLGSECFLLAVMAYDRYTAICHPLRYTNLMSPKICGLMTAFSWILGSTDGIIDVVATFSFSYCGSREIAHFFCDFPSLLILSCSDTSIFEKILFICCIVMIVFPVAIIIASYARVILAVIHMGSGEGRRKAFTTCSSHLLVVGMYYGAALFMYIRPTSDRSPTQDKMVSVFYTILTPMLNPLIYSLRNKEVTRAFMKILGKGKSGE</sequence>